<evidence type="ECO:0000255" key="1">
    <source>
        <dbReference type="HAMAP-Rule" id="MF_00241"/>
    </source>
</evidence>
<dbReference type="EC" id="3.2.2.-" evidence="1"/>
<dbReference type="EC" id="4.2.99.18" evidence="1"/>
<dbReference type="EMBL" id="CP000968">
    <property type="protein sequence ID" value="ACB07919.1"/>
    <property type="molecule type" value="Genomic_DNA"/>
</dbReference>
<dbReference type="RefSeq" id="WP_012309816.1">
    <property type="nucleotide sequence ID" value="NC_010482.1"/>
</dbReference>
<dbReference type="SMR" id="B1L640"/>
<dbReference type="STRING" id="374847.Kcr_1173"/>
<dbReference type="EnsemblBacteria" id="ACB07919">
    <property type="protein sequence ID" value="ACB07919"/>
    <property type="gene ID" value="Kcr_1173"/>
</dbReference>
<dbReference type="GeneID" id="6094450"/>
<dbReference type="KEGG" id="kcr:Kcr_1173"/>
<dbReference type="eggNOG" id="arCOG04357">
    <property type="taxonomic scope" value="Archaea"/>
</dbReference>
<dbReference type="HOGENOM" id="CLU_104937_0_0_2"/>
<dbReference type="InParanoid" id="B1L640"/>
<dbReference type="OrthoDB" id="35941at2157"/>
<dbReference type="PhylomeDB" id="B1L640"/>
<dbReference type="Proteomes" id="UP000001686">
    <property type="component" value="Chromosome"/>
</dbReference>
<dbReference type="GO" id="GO:0140078">
    <property type="term" value="F:class I DNA-(apurinic or apyrimidinic site) endonuclease activity"/>
    <property type="evidence" value="ECO:0007669"/>
    <property type="project" value="UniProtKB-EC"/>
</dbReference>
<dbReference type="GO" id="GO:0016799">
    <property type="term" value="F:hydrolase activity, hydrolyzing N-glycosyl compounds"/>
    <property type="evidence" value="ECO:0007669"/>
    <property type="project" value="UniProtKB-UniRule"/>
</dbReference>
<dbReference type="GO" id="GO:0006284">
    <property type="term" value="P:base-excision repair"/>
    <property type="evidence" value="ECO:0007669"/>
    <property type="project" value="UniProtKB-UniRule"/>
</dbReference>
<dbReference type="CDD" id="cd00056">
    <property type="entry name" value="ENDO3c"/>
    <property type="match status" value="1"/>
</dbReference>
<dbReference type="Gene3D" id="1.10.1670.10">
    <property type="entry name" value="Helix-hairpin-Helix base-excision DNA repair enzymes (C-terminal)"/>
    <property type="match status" value="1"/>
</dbReference>
<dbReference type="Gene3D" id="1.10.340.30">
    <property type="entry name" value="Hypothetical protein, domain 2"/>
    <property type="match status" value="1"/>
</dbReference>
<dbReference type="HAMAP" id="MF_00241">
    <property type="entry name" value="Ogg"/>
    <property type="match status" value="1"/>
</dbReference>
<dbReference type="InterPro" id="IPR012092">
    <property type="entry name" value="DNA_glyclase/AP_lyase_Ogg"/>
</dbReference>
<dbReference type="InterPro" id="IPR011257">
    <property type="entry name" value="DNA_glycosylase"/>
</dbReference>
<dbReference type="InterPro" id="IPR003265">
    <property type="entry name" value="HhH-GPD_domain"/>
</dbReference>
<dbReference type="InterPro" id="IPR023170">
    <property type="entry name" value="HhH_base_excis_C"/>
</dbReference>
<dbReference type="NCBIfam" id="NF002305">
    <property type="entry name" value="PRK01229.1"/>
    <property type="match status" value="1"/>
</dbReference>
<dbReference type="Pfam" id="PF22175">
    <property type="entry name" value="Ogg-HhH"/>
    <property type="match status" value="1"/>
</dbReference>
<dbReference type="PIRSF" id="PIRSF005954">
    <property type="entry name" value="Thrmst_ogg"/>
    <property type="match status" value="1"/>
</dbReference>
<dbReference type="SMART" id="SM00478">
    <property type="entry name" value="ENDO3c"/>
    <property type="match status" value="1"/>
</dbReference>
<dbReference type="SUPFAM" id="SSF48150">
    <property type="entry name" value="DNA-glycosylase"/>
    <property type="match status" value="1"/>
</dbReference>
<sequence length="209" mass="24480">MGVDDLVNDVMRLKGSRVREIIERRMREFERERSDEELFKELVFCLLTANFSAEGGLRILESLGDGIFTLSEEELAAKLAELGHRYPRKRAEFIVEARKLIPILRDIISSFRDERLLREWLVKNVKGLGYKEASHFLRNIGFKNVSIIDYHILDLLMKYGILEEKPKSLSRARYLMIESILEEISRRTGINLGELDLYLWYIETGKVLK</sequence>
<name>OGG1_KORCO</name>
<comment type="function">
    <text evidence="1">Catalyzes the excision of an oxidatively damaged form of guanine (7,8-dihydro-8-oxoguanine = 8-oxoG) from DNA. Also cleaves the DNA backbone at apurinic/apyrimidinic sites (AP sites).</text>
</comment>
<comment type="catalytic activity">
    <reaction evidence="1">
        <text>2'-deoxyribonucleotide-(2'-deoxyribose 5'-phosphate)-2'-deoxyribonucleotide-DNA = a 3'-end 2'-deoxyribonucleotide-(2,3-dehydro-2,3-deoxyribose 5'-phosphate)-DNA + a 5'-end 5'-phospho-2'-deoxyribonucleoside-DNA + H(+)</text>
        <dbReference type="Rhea" id="RHEA:66592"/>
        <dbReference type="Rhea" id="RHEA-COMP:13180"/>
        <dbReference type="Rhea" id="RHEA-COMP:16897"/>
        <dbReference type="Rhea" id="RHEA-COMP:17067"/>
        <dbReference type="ChEBI" id="CHEBI:15378"/>
        <dbReference type="ChEBI" id="CHEBI:136412"/>
        <dbReference type="ChEBI" id="CHEBI:157695"/>
        <dbReference type="ChEBI" id="CHEBI:167181"/>
        <dbReference type="EC" id="4.2.99.18"/>
    </reaction>
</comment>
<comment type="similarity">
    <text evidence="1">Belongs to the type-2 OGG1 family.</text>
</comment>
<organism>
    <name type="scientific">Korarchaeum cryptofilum (strain OPF8)</name>
    <dbReference type="NCBI Taxonomy" id="374847"/>
    <lineage>
        <taxon>Archaea</taxon>
        <taxon>Thermoproteota</taxon>
        <taxon>Candidatus Korarchaeia</taxon>
        <taxon>Candidatus Korarchaeales</taxon>
        <taxon>Candidatus Korarchaeaceae</taxon>
        <taxon>Candidatus Korarchaeum</taxon>
    </lineage>
</organism>
<gene>
    <name evidence="1" type="primary">ogg</name>
    <name type="ordered locus">Kcr_1173</name>
</gene>
<reference key="1">
    <citation type="journal article" date="2008" name="Proc. Natl. Acad. Sci. U.S.A.">
        <title>A korarchaeal genome reveals new insights into the evolution of the Archaea.</title>
        <authorList>
            <person name="Elkins J.G."/>
            <person name="Podar M."/>
            <person name="Graham D.E."/>
            <person name="Makarova K.S."/>
            <person name="Wolf Y."/>
            <person name="Randau L."/>
            <person name="Hedlund B.P."/>
            <person name="Brochier-Armanet C."/>
            <person name="Kunin V."/>
            <person name="Anderson I."/>
            <person name="Lapidus A."/>
            <person name="Goltsman E."/>
            <person name="Barry K."/>
            <person name="Koonin E.V."/>
            <person name="Hugenholtz P."/>
            <person name="Kyrpides N."/>
            <person name="Wanner G."/>
            <person name="Richardson P."/>
            <person name="Keller M."/>
            <person name="Stetter K.O."/>
        </authorList>
    </citation>
    <scope>NUCLEOTIDE SEQUENCE [LARGE SCALE GENOMIC DNA]</scope>
    <source>
        <strain>OPF8</strain>
    </source>
</reference>
<feature type="chain" id="PRO_1000100732" description="8-oxoguanine DNA glycosylase/AP lyase">
    <location>
        <begin position="1"/>
        <end position="209"/>
    </location>
</feature>
<feature type="active site" evidence="1">
    <location>
        <position position="131"/>
    </location>
</feature>
<feature type="active site" evidence="1">
    <location>
        <position position="149"/>
    </location>
</feature>
<feature type="site" description="Important for guanine/8-oxoguanine distinction" evidence="1">
    <location>
        <position position="209"/>
    </location>
</feature>
<protein>
    <recommendedName>
        <fullName evidence="1">8-oxoguanine DNA glycosylase/AP lyase</fullName>
    </recommendedName>
    <domain>
        <recommendedName>
            <fullName evidence="1">8-oxoguanine DNA glycosylase</fullName>
            <shortName evidence="1">8-oxoG DNA glycosylase</shortName>
            <ecNumber evidence="1">3.2.2.-</ecNumber>
        </recommendedName>
    </domain>
    <domain>
        <recommendedName>
            <fullName evidence="1">DNA-(apurinic or apyrimidinic site) lyase</fullName>
            <shortName evidence="1">AP lyase</shortName>
            <ecNumber evidence="1">4.2.99.18</ecNumber>
        </recommendedName>
    </domain>
</protein>
<keyword id="KW-0227">DNA damage</keyword>
<keyword id="KW-0234">DNA repair</keyword>
<keyword id="KW-0326">Glycosidase</keyword>
<keyword id="KW-0378">Hydrolase</keyword>
<keyword id="KW-0456">Lyase</keyword>
<keyword id="KW-0511">Multifunctional enzyme</keyword>
<keyword id="KW-1185">Reference proteome</keyword>
<accession>B1L640</accession>
<proteinExistence type="inferred from homology"/>